<comment type="function">
    <text evidence="1">Nucleotidase that shows phosphatase activity on nucleoside 5'-monophosphates.</text>
</comment>
<comment type="catalytic activity">
    <reaction evidence="1">
        <text>a ribonucleoside 5'-phosphate + H2O = a ribonucleoside + phosphate</text>
        <dbReference type="Rhea" id="RHEA:12484"/>
        <dbReference type="ChEBI" id="CHEBI:15377"/>
        <dbReference type="ChEBI" id="CHEBI:18254"/>
        <dbReference type="ChEBI" id="CHEBI:43474"/>
        <dbReference type="ChEBI" id="CHEBI:58043"/>
        <dbReference type="EC" id="3.1.3.5"/>
    </reaction>
</comment>
<comment type="cofactor">
    <cofactor evidence="1">
        <name>a divalent metal cation</name>
        <dbReference type="ChEBI" id="CHEBI:60240"/>
    </cofactor>
    <text evidence="1">Binds 1 divalent metal cation per subunit.</text>
</comment>
<comment type="subcellular location">
    <subcellularLocation>
        <location evidence="1">Cytoplasm</location>
    </subcellularLocation>
</comment>
<comment type="similarity">
    <text evidence="1">Belongs to the SurE nucleotidase family.</text>
</comment>
<proteinExistence type="inferred from homology"/>
<name>SURE_CUPTR</name>
<evidence type="ECO:0000255" key="1">
    <source>
        <dbReference type="HAMAP-Rule" id="MF_00060"/>
    </source>
</evidence>
<organism>
    <name type="scientific">Cupriavidus taiwanensis (strain DSM 17343 / BCRC 17206 / CCUG 44338 / CIP 107171 / LMG 19424 / R1)</name>
    <name type="common">Ralstonia taiwanensis (strain LMG 19424)</name>
    <dbReference type="NCBI Taxonomy" id="977880"/>
    <lineage>
        <taxon>Bacteria</taxon>
        <taxon>Pseudomonadati</taxon>
        <taxon>Pseudomonadota</taxon>
        <taxon>Betaproteobacteria</taxon>
        <taxon>Burkholderiales</taxon>
        <taxon>Burkholderiaceae</taxon>
        <taxon>Cupriavidus</taxon>
    </lineage>
</organism>
<dbReference type="EC" id="3.1.3.5" evidence="1"/>
<dbReference type="EMBL" id="CU633749">
    <property type="protein sequence ID" value="CAQ69862.1"/>
    <property type="molecule type" value="Genomic_DNA"/>
</dbReference>
<dbReference type="RefSeq" id="WP_012353175.1">
    <property type="nucleotide sequence ID" value="NC_010528.1"/>
</dbReference>
<dbReference type="SMR" id="B3R1L4"/>
<dbReference type="GeneID" id="29761851"/>
<dbReference type="KEGG" id="cti:RALTA_A1921"/>
<dbReference type="eggNOG" id="COG0496">
    <property type="taxonomic scope" value="Bacteria"/>
</dbReference>
<dbReference type="HOGENOM" id="CLU_045192_1_2_4"/>
<dbReference type="BioCyc" id="CTAI977880:RALTA_RS09265-MONOMER"/>
<dbReference type="Proteomes" id="UP000001692">
    <property type="component" value="Chromosome 1"/>
</dbReference>
<dbReference type="GO" id="GO:0005737">
    <property type="term" value="C:cytoplasm"/>
    <property type="evidence" value="ECO:0007669"/>
    <property type="project" value="UniProtKB-SubCell"/>
</dbReference>
<dbReference type="GO" id="GO:0008254">
    <property type="term" value="F:3'-nucleotidase activity"/>
    <property type="evidence" value="ECO:0007669"/>
    <property type="project" value="TreeGrafter"/>
</dbReference>
<dbReference type="GO" id="GO:0008253">
    <property type="term" value="F:5'-nucleotidase activity"/>
    <property type="evidence" value="ECO:0007669"/>
    <property type="project" value="UniProtKB-UniRule"/>
</dbReference>
<dbReference type="GO" id="GO:0004309">
    <property type="term" value="F:exopolyphosphatase activity"/>
    <property type="evidence" value="ECO:0007669"/>
    <property type="project" value="TreeGrafter"/>
</dbReference>
<dbReference type="GO" id="GO:0046872">
    <property type="term" value="F:metal ion binding"/>
    <property type="evidence" value="ECO:0007669"/>
    <property type="project" value="UniProtKB-UniRule"/>
</dbReference>
<dbReference type="GO" id="GO:0000166">
    <property type="term" value="F:nucleotide binding"/>
    <property type="evidence" value="ECO:0007669"/>
    <property type="project" value="UniProtKB-KW"/>
</dbReference>
<dbReference type="FunFam" id="3.40.1210.10:FF:000001">
    <property type="entry name" value="5'/3'-nucleotidase SurE"/>
    <property type="match status" value="1"/>
</dbReference>
<dbReference type="Gene3D" id="3.40.1210.10">
    <property type="entry name" value="Survival protein SurE-like phosphatase/nucleotidase"/>
    <property type="match status" value="1"/>
</dbReference>
<dbReference type="HAMAP" id="MF_00060">
    <property type="entry name" value="SurE"/>
    <property type="match status" value="1"/>
</dbReference>
<dbReference type="InterPro" id="IPR030048">
    <property type="entry name" value="SurE"/>
</dbReference>
<dbReference type="InterPro" id="IPR002828">
    <property type="entry name" value="SurE-like_Pase/nucleotidase"/>
</dbReference>
<dbReference type="InterPro" id="IPR036523">
    <property type="entry name" value="SurE-like_sf"/>
</dbReference>
<dbReference type="NCBIfam" id="NF001489">
    <property type="entry name" value="PRK00346.1-3"/>
    <property type="match status" value="1"/>
</dbReference>
<dbReference type="NCBIfam" id="NF001490">
    <property type="entry name" value="PRK00346.1-4"/>
    <property type="match status" value="1"/>
</dbReference>
<dbReference type="NCBIfam" id="TIGR00087">
    <property type="entry name" value="surE"/>
    <property type="match status" value="1"/>
</dbReference>
<dbReference type="PANTHER" id="PTHR30457">
    <property type="entry name" value="5'-NUCLEOTIDASE SURE"/>
    <property type="match status" value="1"/>
</dbReference>
<dbReference type="PANTHER" id="PTHR30457:SF12">
    <property type="entry name" value="5'_3'-NUCLEOTIDASE SURE"/>
    <property type="match status" value="1"/>
</dbReference>
<dbReference type="Pfam" id="PF01975">
    <property type="entry name" value="SurE"/>
    <property type="match status" value="1"/>
</dbReference>
<dbReference type="SUPFAM" id="SSF64167">
    <property type="entry name" value="SurE-like"/>
    <property type="match status" value="1"/>
</dbReference>
<accession>B3R1L4</accession>
<gene>
    <name evidence="1" type="primary">surE</name>
    <name type="ordered locus">RALTA_A1921</name>
</gene>
<protein>
    <recommendedName>
        <fullName evidence="1">5'-nucleotidase SurE</fullName>
        <ecNumber evidence="1">3.1.3.5</ecNumber>
    </recommendedName>
    <alternativeName>
        <fullName evidence="1">Nucleoside 5'-monophosphate phosphohydrolase</fullName>
    </alternativeName>
</protein>
<keyword id="KW-0963">Cytoplasm</keyword>
<keyword id="KW-0378">Hydrolase</keyword>
<keyword id="KW-0479">Metal-binding</keyword>
<keyword id="KW-0547">Nucleotide-binding</keyword>
<reference key="1">
    <citation type="journal article" date="2008" name="Genome Res.">
        <title>Genome sequence of the beta-rhizobium Cupriavidus taiwanensis and comparative genomics of rhizobia.</title>
        <authorList>
            <person name="Amadou C."/>
            <person name="Pascal G."/>
            <person name="Mangenot S."/>
            <person name="Glew M."/>
            <person name="Bontemps C."/>
            <person name="Capela D."/>
            <person name="Carrere S."/>
            <person name="Cruveiller S."/>
            <person name="Dossat C."/>
            <person name="Lajus A."/>
            <person name="Marchetti M."/>
            <person name="Poinsot V."/>
            <person name="Rouy Z."/>
            <person name="Servin B."/>
            <person name="Saad M."/>
            <person name="Schenowitz C."/>
            <person name="Barbe V."/>
            <person name="Batut J."/>
            <person name="Medigue C."/>
            <person name="Masson-Boivin C."/>
        </authorList>
    </citation>
    <scope>NUCLEOTIDE SEQUENCE [LARGE SCALE GENOMIC DNA]</scope>
    <source>
        <strain>DSM 17343 / BCRC 17206 / CCUG 44338 / CIP 107171 / LMG 19424 / R1</strain>
    </source>
</reference>
<feature type="chain" id="PRO_1000091997" description="5'-nucleotidase SurE">
    <location>
        <begin position="1"/>
        <end position="250"/>
    </location>
</feature>
<feature type="binding site" evidence="1">
    <location>
        <position position="8"/>
    </location>
    <ligand>
        <name>a divalent metal cation</name>
        <dbReference type="ChEBI" id="CHEBI:60240"/>
    </ligand>
</feature>
<feature type="binding site" evidence="1">
    <location>
        <position position="9"/>
    </location>
    <ligand>
        <name>a divalent metal cation</name>
        <dbReference type="ChEBI" id="CHEBI:60240"/>
    </ligand>
</feature>
<feature type="binding site" evidence="1">
    <location>
        <position position="39"/>
    </location>
    <ligand>
        <name>a divalent metal cation</name>
        <dbReference type="ChEBI" id="CHEBI:60240"/>
    </ligand>
</feature>
<feature type="binding site" evidence="1">
    <location>
        <position position="95"/>
    </location>
    <ligand>
        <name>a divalent metal cation</name>
        <dbReference type="ChEBI" id="CHEBI:60240"/>
    </ligand>
</feature>
<sequence>MHILLANDDGYLAPGLAVLHAALAPLGRITVIAPEQNHSGASNSLTLQRPLSVYEAREGVQKGFRFVNGTPTDCVHIALTGLLEDKPDLVVSGINQGQNMGEDVLYSGTVAAAIEGYLLGIPSVAFSQVDKGWEHLDAAARVARTVVERIIGTPPAEPFLLNVNIPNLPFEHIRGYRATRLGKRHPSQPVITQVNPRGDTNYWIGPAGDARDASEGTDFHATAQGYVSLTPLQLDLTHRGQLDALDQWLK</sequence>